<keyword id="KW-1003">Cell membrane</keyword>
<keyword id="KW-0472">Membrane</keyword>
<keyword id="KW-1185">Reference proteome</keyword>
<keyword id="KW-0812">Transmembrane</keyword>
<keyword id="KW-1133">Transmembrane helix</keyword>
<keyword id="KW-0813">Transport</keyword>
<comment type="function">
    <text evidence="2">Involved in secretion of bacillibactin.</text>
</comment>
<comment type="subcellular location">
    <subcellularLocation>
        <location evidence="3">Cell membrane</location>
        <topology evidence="3">Multi-pass membrane protein</topology>
    </subcellularLocation>
</comment>
<comment type="induction">
    <text evidence="2">Induced by mta.</text>
</comment>
<comment type="similarity">
    <text evidence="3">Belongs to the major facilitator superfamily.</text>
</comment>
<sequence length="402" mass="43675">MKNIIALSSVPLVMTLGNSMLIPVLPMMEKKLSVTSFQVSLIITVYSVVAIICIPIAGYLSDRFGRKKILLPCLLIAGLGGAVAAFASTYMKNPYAMILAGRVLQGIGSAGAAPIVMPFIGDLFKGDDEKVSAGLGDIETANTSGKVLSPILGALLASWYWFVPFWFIPFFCLISFLLVLFLVAKPEEDEDAPAVSEFIKSVKKIFKQDGRWLYTVFIIGCVIMFLLFGVLFYLSDTLENKYAIDGVAKGGLLAIPLLFLSTSSFIAGKKIGKDKGRMKFCVVTGMILLTLSFIALWWNHSFYFLFVFLSFGGIGIGMALPALDALITEGIESEQCGTISSFYNSMRFIGVALGPPVFAALMSNANWIIFILSAFCSIVSLFLVLFTVDAKKSEEEKNLGTV</sequence>
<reference key="1">
    <citation type="journal article" date="1997" name="Nature">
        <title>The complete genome sequence of the Gram-positive bacterium Bacillus subtilis.</title>
        <authorList>
            <person name="Kunst F."/>
            <person name="Ogasawara N."/>
            <person name="Moszer I."/>
            <person name="Albertini A.M."/>
            <person name="Alloni G."/>
            <person name="Azevedo V."/>
            <person name="Bertero M.G."/>
            <person name="Bessieres P."/>
            <person name="Bolotin A."/>
            <person name="Borchert S."/>
            <person name="Borriss R."/>
            <person name="Boursier L."/>
            <person name="Brans A."/>
            <person name="Braun M."/>
            <person name="Brignell S.C."/>
            <person name="Bron S."/>
            <person name="Brouillet S."/>
            <person name="Bruschi C.V."/>
            <person name="Caldwell B."/>
            <person name="Capuano V."/>
            <person name="Carter N.M."/>
            <person name="Choi S.-K."/>
            <person name="Codani J.-J."/>
            <person name="Connerton I.F."/>
            <person name="Cummings N.J."/>
            <person name="Daniel R.A."/>
            <person name="Denizot F."/>
            <person name="Devine K.M."/>
            <person name="Duesterhoeft A."/>
            <person name="Ehrlich S.D."/>
            <person name="Emmerson P.T."/>
            <person name="Entian K.-D."/>
            <person name="Errington J."/>
            <person name="Fabret C."/>
            <person name="Ferrari E."/>
            <person name="Foulger D."/>
            <person name="Fritz C."/>
            <person name="Fujita M."/>
            <person name="Fujita Y."/>
            <person name="Fuma S."/>
            <person name="Galizzi A."/>
            <person name="Galleron N."/>
            <person name="Ghim S.-Y."/>
            <person name="Glaser P."/>
            <person name="Goffeau A."/>
            <person name="Golightly E.J."/>
            <person name="Grandi G."/>
            <person name="Guiseppi G."/>
            <person name="Guy B.J."/>
            <person name="Haga K."/>
            <person name="Haiech J."/>
            <person name="Harwood C.R."/>
            <person name="Henaut A."/>
            <person name="Hilbert H."/>
            <person name="Holsappel S."/>
            <person name="Hosono S."/>
            <person name="Hullo M.-F."/>
            <person name="Itaya M."/>
            <person name="Jones L.-M."/>
            <person name="Joris B."/>
            <person name="Karamata D."/>
            <person name="Kasahara Y."/>
            <person name="Klaerr-Blanchard M."/>
            <person name="Klein C."/>
            <person name="Kobayashi Y."/>
            <person name="Koetter P."/>
            <person name="Koningstein G."/>
            <person name="Krogh S."/>
            <person name="Kumano M."/>
            <person name="Kurita K."/>
            <person name="Lapidus A."/>
            <person name="Lardinois S."/>
            <person name="Lauber J."/>
            <person name="Lazarevic V."/>
            <person name="Lee S.-M."/>
            <person name="Levine A."/>
            <person name="Liu H."/>
            <person name="Masuda S."/>
            <person name="Mauel C."/>
            <person name="Medigue C."/>
            <person name="Medina N."/>
            <person name="Mellado R.P."/>
            <person name="Mizuno M."/>
            <person name="Moestl D."/>
            <person name="Nakai S."/>
            <person name="Noback M."/>
            <person name="Noone D."/>
            <person name="O'Reilly M."/>
            <person name="Ogawa K."/>
            <person name="Ogiwara A."/>
            <person name="Oudega B."/>
            <person name="Park S.-H."/>
            <person name="Parro V."/>
            <person name="Pohl T.M."/>
            <person name="Portetelle D."/>
            <person name="Porwollik S."/>
            <person name="Prescott A.M."/>
            <person name="Presecan E."/>
            <person name="Pujic P."/>
            <person name="Purnelle B."/>
            <person name="Rapoport G."/>
            <person name="Rey M."/>
            <person name="Reynolds S."/>
            <person name="Rieger M."/>
            <person name="Rivolta C."/>
            <person name="Rocha E."/>
            <person name="Roche B."/>
            <person name="Rose M."/>
            <person name="Sadaie Y."/>
            <person name="Sato T."/>
            <person name="Scanlan E."/>
            <person name="Schleich S."/>
            <person name="Schroeter R."/>
            <person name="Scoffone F."/>
            <person name="Sekiguchi J."/>
            <person name="Sekowska A."/>
            <person name="Seror S.J."/>
            <person name="Serror P."/>
            <person name="Shin B.-S."/>
            <person name="Soldo B."/>
            <person name="Sorokin A."/>
            <person name="Tacconi E."/>
            <person name="Takagi T."/>
            <person name="Takahashi H."/>
            <person name="Takemaru K."/>
            <person name="Takeuchi M."/>
            <person name="Tamakoshi A."/>
            <person name="Tanaka T."/>
            <person name="Terpstra P."/>
            <person name="Tognoni A."/>
            <person name="Tosato V."/>
            <person name="Uchiyama S."/>
            <person name="Vandenbol M."/>
            <person name="Vannier F."/>
            <person name="Vassarotti A."/>
            <person name="Viari A."/>
            <person name="Wambutt R."/>
            <person name="Wedler E."/>
            <person name="Wedler H."/>
            <person name="Weitzenegger T."/>
            <person name="Winters P."/>
            <person name="Wipat A."/>
            <person name="Yamamoto H."/>
            <person name="Yamane K."/>
            <person name="Yasumoto K."/>
            <person name="Yata K."/>
            <person name="Yoshida K."/>
            <person name="Yoshikawa H.-F."/>
            <person name="Zumstein E."/>
            <person name="Yoshikawa H."/>
            <person name="Danchin A."/>
        </authorList>
    </citation>
    <scope>NUCLEOTIDE SEQUENCE [LARGE SCALE GENOMIC DNA]</scope>
    <source>
        <strain>168</strain>
    </source>
</reference>
<reference key="2">
    <citation type="journal article" date="2009" name="Microbiology">
        <title>From a consortium sequence to a unified sequence: the Bacillus subtilis 168 reference genome a decade later.</title>
        <authorList>
            <person name="Barbe V."/>
            <person name="Cruveiller S."/>
            <person name="Kunst F."/>
            <person name="Lenoble P."/>
            <person name="Meurice G."/>
            <person name="Sekowska A."/>
            <person name="Vallenet D."/>
            <person name="Wang T."/>
            <person name="Moszer I."/>
            <person name="Medigue C."/>
            <person name="Danchin A."/>
        </authorList>
    </citation>
    <scope>SEQUENCE REVISION</scope>
</reference>
<reference key="3">
    <citation type="journal article" date="2008" name="J. Bacteriol.">
        <title>The major facilitator superfamily-type transporter YmfE and the multidrug-efflux activator Mta mediate bacillibactin secretion in Bacillus subtilis.</title>
        <authorList>
            <person name="Miethke M."/>
            <person name="Schmidt S."/>
            <person name="Marahiel M.A."/>
        </authorList>
    </citation>
    <scope>FUNCTION AS AN EXPORTER</scope>
    <scope>INDUCTION</scope>
    <source>
        <strain>ATCC 21332 / IAM 1213</strain>
    </source>
</reference>
<dbReference type="EMBL" id="AL009126">
    <property type="protein sequence ID" value="CAB13555.2"/>
    <property type="molecule type" value="Genomic_DNA"/>
</dbReference>
<dbReference type="PIR" id="C69885">
    <property type="entry name" value="C69885"/>
</dbReference>
<dbReference type="PIR" id="D69885">
    <property type="entry name" value="D69885"/>
</dbReference>
<dbReference type="SMR" id="O31762"/>
<dbReference type="FunCoup" id="O31762">
    <property type="interactions" value="44"/>
</dbReference>
<dbReference type="STRING" id="224308.BSU16825"/>
<dbReference type="TCDB" id="2.A.1.32.2">
    <property type="family name" value="the major facilitator superfamily (mfs)"/>
</dbReference>
<dbReference type="PaxDb" id="224308-BSU16825"/>
<dbReference type="EnsemblBacteria" id="CAB13555">
    <property type="protein sequence ID" value="CAB13555"/>
    <property type="gene ID" value="BSU_16825"/>
</dbReference>
<dbReference type="GeneID" id="939662"/>
<dbReference type="KEGG" id="bsu:BSU16825"/>
<dbReference type="PATRIC" id="fig|224308.43.peg.1779"/>
<dbReference type="eggNOG" id="COG2814">
    <property type="taxonomic scope" value="Bacteria"/>
</dbReference>
<dbReference type="InParanoid" id="O31762"/>
<dbReference type="OrthoDB" id="2986280at2"/>
<dbReference type="PhylomeDB" id="O31762"/>
<dbReference type="BioCyc" id="BSUB:BSU16825-MONOMER"/>
<dbReference type="Proteomes" id="UP000001570">
    <property type="component" value="Chromosome"/>
</dbReference>
<dbReference type="GO" id="GO:0005886">
    <property type="term" value="C:plasma membrane"/>
    <property type="evidence" value="ECO:0000318"/>
    <property type="project" value="GO_Central"/>
</dbReference>
<dbReference type="GO" id="GO:0022857">
    <property type="term" value="F:transmembrane transporter activity"/>
    <property type="evidence" value="ECO:0000318"/>
    <property type="project" value="GO_Central"/>
</dbReference>
<dbReference type="GO" id="GO:0055085">
    <property type="term" value="P:transmembrane transport"/>
    <property type="evidence" value="ECO:0000318"/>
    <property type="project" value="GO_Central"/>
</dbReference>
<dbReference type="CDD" id="cd17474">
    <property type="entry name" value="MFS_YfmO_like"/>
    <property type="match status" value="1"/>
</dbReference>
<dbReference type="Gene3D" id="1.20.1250.20">
    <property type="entry name" value="MFS general substrate transporter like domains"/>
    <property type="match status" value="1"/>
</dbReference>
<dbReference type="InterPro" id="IPR011701">
    <property type="entry name" value="MFS"/>
</dbReference>
<dbReference type="InterPro" id="IPR020846">
    <property type="entry name" value="MFS_dom"/>
</dbReference>
<dbReference type="InterPro" id="IPR050189">
    <property type="entry name" value="MFS_Efflux_Transporters"/>
</dbReference>
<dbReference type="InterPro" id="IPR036259">
    <property type="entry name" value="MFS_trans_sf"/>
</dbReference>
<dbReference type="InterPro" id="IPR001958">
    <property type="entry name" value="Tet-R_TetA/multi-R_MdtG-like"/>
</dbReference>
<dbReference type="PANTHER" id="PTHR43124:SF3">
    <property type="entry name" value="CHLORAMPHENICOL EFFLUX PUMP RV0191"/>
    <property type="match status" value="1"/>
</dbReference>
<dbReference type="PANTHER" id="PTHR43124">
    <property type="entry name" value="PURINE EFFLUX PUMP PBUE"/>
    <property type="match status" value="1"/>
</dbReference>
<dbReference type="Pfam" id="PF07690">
    <property type="entry name" value="MFS_1"/>
    <property type="match status" value="1"/>
</dbReference>
<dbReference type="PRINTS" id="PR01035">
    <property type="entry name" value="TCRTETA"/>
</dbReference>
<dbReference type="SUPFAM" id="SSF103473">
    <property type="entry name" value="MFS general substrate transporter"/>
    <property type="match status" value="1"/>
</dbReference>
<dbReference type="PROSITE" id="PS50850">
    <property type="entry name" value="MFS"/>
    <property type="match status" value="1"/>
</dbReference>
<evidence type="ECO:0000255" key="1"/>
<evidence type="ECO:0000269" key="2">
    <source>
    </source>
</evidence>
<evidence type="ECO:0000305" key="3"/>
<feature type="chain" id="PRO_0000349884" description="Bacillibactin exporter">
    <location>
        <begin position="1"/>
        <end position="402"/>
    </location>
</feature>
<feature type="transmembrane region" description="Helical" evidence="1">
    <location>
        <begin position="4"/>
        <end position="24"/>
    </location>
</feature>
<feature type="transmembrane region" description="Helical" evidence="1">
    <location>
        <begin position="39"/>
        <end position="59"/>
    </location>
</feature>
<feature type="transmembrane region" description="Helical" evidence="1">
    <location>
        <begin position="69"/>
        <end position="89"/>
    </location>
</feature>
<feature type="transmembrane region" description="Helical" evidence="1">
    <location>
        <begin position="104"/>
        <end position="124"/>
    </location>
</feature>
<feature type="transmembrane region" description="Helical" evidence="1">
    <location>
        <begin position="162"/>
        <end position="182"/>
    </location>
</feature>
<feature type="transmembrane region" description="Helical" evidence="1">
    <location>
        <begin position="212"/>
        <end position="232"/>
    </location>
</feature>
<feature type="transmembrane region" description="Helical" evidence="1">
    <location>
        <begin position="247"/>
        <end position="267"/>
    </location>
</feature>
<feature type="transmembrane region" description="Helical" evidence="1">
    <location>
        <begin position="278"/>
        <end position="298"/>
    </location>
</feature>
<feature type="transmembrane region" description="Helical" evidence="1">
    <location>
        <begin position="302"/>
        <end position="322"/>
    </location>
</feature>
<feature type="transmembrane region" description="Helical" evidence="1">
    <location>
        <begin position="342"/>
        <end position="362"/>
    </location>
</feature>
<feature type="transmembrane region" description="Helical" evidence="1">
    <location>
        <begin position="368"/>
        <end position="388"/>
    </location>
</feature>
<accession>O31762</accession>
<accession>O31763</accession>
<name>BBEX_BACSU</name>
<gene>
    <name type="primary">ymfD</name>
    <name type="synonym">ymfE</name>
    <name type="ordered locus">BSU16825</name>
    <name type="ORF">BSU16820</name>
    <name type="ORF">BSU16830</name>
</gene>
<proteinExistence type="evidence at protein level"/>
<organism>
    <name type="scientific">Bacillus subtilis (strain 168)</name>
    <dbReference type="NCBI Taxonomy" id="224308"/>
    <lineage>
        <taxon>Bacteria</taxon>
        <taxon>Bacillati</taxon>
        <taxon>Bacillota</taxon>
        <taxon>Bacilli</taxon>
        <taxon>Bacillales</taxon>
        <taxon>Bacillaceae</taxon>
        <taxon>Bacillus</taxon>
    </lineage>
</organism>
<protein>
    <recommendedName>
        <fullName>Bacillibactin exporter</fullName>
    </recommendedName>
</protein>